<protein>
    <recommendedName>
        <fullName evidence="1">Protein translocase subunit SecA</fullName>
        <ecNumber evidence="1">7.4.2.8</ecNumber>
    </recommendedName>
</protein>
<keyword id="KW-0067">ATP-binding</keyword>
<keyword id="KW-0997">Cell inner membrane</keyword>
<keyword id="KW-1003">Cell membrane</keyword>
<keyword id="KW-0963">Cytoplasm</keyword>
<keyword id="KW-0472">Membrane</keyword>
<keyword id="KW-0547">Nucleotide-binding</keyword>
<keyword id="KW-0653">Protein transport</keyword>
<keyword id="KW-0793">Thylakoid</keyword>
<keyword id="KW-1278">Translocase</keyword>
<keyword id="KW-0811">Translocation</keyword>
<keyword id="KW-0813">Transport</keyword>
<organism>
    <name type="scientific">Prochlorococcus marinus (strain MIT 9515)</name>
    <dbReference type="NCBI Taxonomy" id="167542"/>
    <lineage>
        <taxon>Bacteria</taxon>
        <taxon>Bacillati</taxon>
        <taxon>Cyanobacteriota</taxon>
        <taxon>Cyanophyceae</taxon>
        <taxon>Synechococcales</taxon>
        <taxon>Prochlorococcaceae</taxon>
        <taxon>Prochlorococcus</taxon>
    </lineage>
</organism>
<comment type="function">
    <text evidence="1">Part of the Sec protein translocase complex. Interacts with the SecYEG preprotein conducting channel. Has a central role in coupling the hydrolysis of ATP to the transfer of proteins into and across the cell membrane, serving as an ATP-driven molecular motor driving the stepwise translocation of polypeptide chains across the membrane.</text>
</comment>
<comment type="function">
    <text evidence="1">Probably participates in protein translocation into and across both the cytoplasmic and thylakoid membranes in cyanobacterial cells.</text>
</comment>
<comment type="catalytic activity">
    <reaction evidence="1">
        <text>ATP + H2O + cellular proteinSide 1 = ADP + phosphate + cellular proteinSide 2.</text>
        <dbReference type="EC" id="7.4.2.8"/>
    </reaction>
</comment>
<comment type="subunit">
    <text evidence="1">Monomer and homodimer. Part of the essential Sec protein translocation apparatus which comprises SecA, SecYEG and auxiliary proteins SecDF. Other proteins may also be involved.</text>
</comment>
<comment type="subcellular location">
    <subcellularLocation>
        <location evidence="1">Cell inner membrane</location>
        <topology evidence="1">Peripheral membrane protein</topology>
        <orientation evidence="1">Cytoplasmic side</orientation>
    </subcellularLocation>
    <subcellularLocation>
        <location evidence="1">Cellular thylakoid membrane</location>
        <topology evidence="1">Peripheral membrane protein</topology>
        <orientation evidence="1">Cytoplasmic side</orientation>
    </subcellularLocation>
    <subcellularLocation>
        <location evidence="1">Cytoplasm</location>
    </subcellularLocation>
</comment>
<comment type="similarity">
    <text evidence="1">Belongs to the SecA family.</text>
</comment>
<proteinExistence type="inferred from homology"/>
<feature type="chain" id="PRO_0000318410" description="Protein translocase subunit SecA">
    <location>
        <begin position="1"/>
        <end position="943"/>
    </location>
</feature>
<feature type="region of interest" description="Disordered" evidence="2">
    <location>
        <begin position="534"/>
        <end position="576"/>
    </location>
</feature>
<feature type="compositionally biased region" description="Low complexity" evidence="2">
    <location>
        <begin position="556"/>
        <end position="570"/>
    </location>
</feature>
<feature type="binding site" evidence="1">
    <location>
        <position position="90"/>
    </location>
    <ligand>
        <name>ATP</name>
        <dbReference type="ChEBI" id="CHEBI:30616"/>
    </ligand>
</feature>
<feature type="binding site" evidence="1">
    <location>
        <begin position="108"/>
        <end position="112"/>
    </location>
    <ligand>
        <name>ATP</name>
        <dbReference type="ChEBI" id="CHEBI:30616"/>
    </ligand>
</feature>
<feature type="binding site" evidence="1">
    <location>
        <position position="509"/>
    </location>
    <ligand>
        <name>ATP</name>
        <dbReference type="ChEBI" id="CHEBI:30616"/>
    </ligand>
</feature>
<evidence type="ECO:0000255" key="1">
    <source>
        <dbReference type="HAMAP-Rule" id="MF_01382"/>
    </source>
</evidence>
<evidence type="ECO:0000256" key="2">
    <source>
        <dbReference type="SAM" id="MobiDB-lite"/>
    </source>
</evidence>
<reference key="1">
    <citation type="journal article" date="2007" name="PLoS Genet.">
        <title>Patterns and implications of gene gain and loss in the evolution of Prochlorococcus.</title>
        <authorList>
            <person name="Kettler G.C."/>
            <person name="Martiny A.C."/>
            <person name="Huang K."/>
            <person name="Zucker J."/>
            <person name="Coleman M.L."/>
            <person name="Rodrigue S."/>
            <person name="Chen F."/>
            <person name="Lapidus A."/>
            <person name="Ferriera S."/>
            <person name="Johnson J."/>
            <person name="Steglich C."/>
            <person name="Church G.M."/>
            <person name="Richardson P."/>
            <person name="Chisholm S.W."/>
        </authorList>
    </citation>
    <scope>NUCLEOTIDE SEQUENCE [LARGE SCALE GENOMIC DNA]</scope>
    <source>
        <strain>MIT 9515</strain>
    </source>
</reference>
<name>SECA_PROM5</name>
<accession>A2BZ24</accession>
<gene>
    <name evidence="1" type="primary">secA</name>
    <name type="ordered locus">P9515_18281</name>
</gene>
<sequence length="943" mass="107626">MLKLLLGDPNTRKLKRYQPIVEEINLLEEEVSILTDDELRNETHNLKSKVSLEINIKRQNEKLEEILPKAFAIVREASKRVLEMRHFDVQLIGGMVLHEGQIAEMKTGEGKTLVATLPCYLNALTGKGVHVVTVNDYLARRDAEWMGQVHRFLGLSVGLIQQDMSPAERKKNYACDITYATNSELGFDYLRDNMATEIEEVVQRKFNYCVIDEVDSILIDEARTPLIISGQIERPQEKYQKAAELALSLIKAKELSKDGIDPEGDYEVDEKQRSCILTDQGFAKCEESLKVNDLYDPQDPWAHYITNALKAKELFVKDVNYIIKKDEAVIVDEFTGRVMPGRRWSDGQHQAIEAKEGLKIQPETQTLASITYQNFFLLYPGLAGMTGTAKTEEVEFEKTYKLESTVVPTNQVRKRQDWADQVFKTEIGKWKAVANETAEIHRNGRPVLVGTTSVEKSELLSSLLFEQQIPHNLLNAKPENVEREAEIVAQAGRSGAVTIATNMAGRGTDIILGGNSDYMARLKLKETLMPLLVKPDNEHKPPIPQQRSSKAGGGFASKSESISNKNSKSSGASLFPCQLGEDTTRKLSLLSNELVKSWGERTLTILELDDRIATAAEKAPTEDKLIQSLRDALSDVKNEYEKVLVHEEENVRKAGGLHVIGTERHESRRVDNQLRGRAGRQGDLGSTRFFLSLEDNLLRIFGGDRVANLMNAFRVDEDMPIESGMLTRSLESAQKKVETYYYDIRKQVFEYDEVMNNQRKAVYNERLRVLKGSDLKKQVLGYGDRTMEEIVEAYINPDLPPEEWDIEQLISKVKEFIYLLNNLKSTDVSVLSVEELKNYLQEQLRIAYDLKEAQIEQFRPGLMREAERFFILQQIDNLWREHLQSMDSLRESVGLRGYGQKDPLIEYKNEGYDMFLEMMTNMRRNVIYSMFMFQPQSEKETKS</sequence>
<dbReference type="EC" id="7.4.2.8" evidence="1"/>
<dbReference type="EMBL" id="CP000552">
    <property type="protein sequence ID" value="ABM73035.1"/>
    <property type="molecule type" value="Genomic_DNA"/>
</dbReference>
<dbReference type="RefSeq" id="WP_011821120.1">
    <property type="nucleotide sequence ID" value="NC_008817.1"/>
</dbReference>
<dbReference type="SMR" id="A2BZ24"/>
<dbReference type="STRING" id="167542.P9515_18281"/>
<dbReference type="GeneID" id="60201611"/>
<dbReference type="KEGG" id="pmc:P9515_18281"/>
<dbReference type="eggNOG" id="COG0653">
    <property type="taxonomic scope" value="Bacteria"/>
</dbReference>
<dbReference type="HOGENOM" id="CLU_005314_3_0_3"/>
<dbReference type="Proteomes" id="UP000001589">
    <property type="component" value="Chromosome"/>
</dbReference>
<dbReference type="GO" id="GO:0031522">
    <property type="term" value="C:cell envelope Sec protein transport complex"/>
    <property type="evidence" value="ECO:0007669"/>
    <property type="project" value="TreeGrafter"/>
</dbReference>
<dbReference type="GO" id="GO:0005829">
    <property type="term" value="C:cytosol"/>
    <property type="evidence" value="ECO:0007669"/>
    <property type="project" value="TreeGrafter"/>
</dbReference>
<dbReference type="GO" id="GO:0031676">
    <property type="term" value="C:plasma membrane-derived thylakoid membrane"/>
    <property type="evidence" value="ECO:0007669"/>
    <property type="project" value="UniProtKB-SubCell"/>
</dbReference>
<dbReference type="GO" id="GO:0005524">
    <property type="term" value="F:ATP binding"/>
    <property type="evidence" value="ECO:0007669"/>
    <property type="project" value="UniProtKB-UniRule"/>
</dbReference>
<dbReference type="GO" id="GO:0008564">
    <property type="term" value="F:protein-exporting ATPase activity"/>
    <property type="evidence" value="ECO:0007669"/>
    <property type="project" value="UniProtKB-EC"/>
</dbReference>
<dbReference type="GO" id="GO:0065002">
    <property type="term" value="P:intracellular protein transmembrane transport"/>
    <property type="evidence" value="ECO:0007669"/>
    <property type="project" value="UniProtKB-UniRule"/>
</dbReference>
<dbReference type="GO" id="GO:0017038">
    <property type="term" value="P:protein import"/>
    <property type="evidence" value="ECO:0007669"/>
    <property type="project" value="InterPro"/>
</dbReference>
<dbReference type="GO" id="GO:0006605">
    <property type="term" value="P:protein targeting"/>
    <property type="evidence" value="ECO:0007669"/>
    <property type="project" value="UniProtKB-UniRule"/>
</dbReference>
<dbReference type="GO" id="GO:0043952">
    <property type="term" value="P:protein transport by the Sec complex"/>
    <property type="evidence" value="ECO:0007669"/>
    <property type="project" value="TreeGrafter"/>
</dbReference>
<dbReference type="CDD" id="cd17928">
    <property type="entry name" value="DEXDc_SecA"/>
    <property type="match status" value="1"/>
</dbReference>
<dbReference type="CDD" id="cd18803">
    <property type="entry name" value="SF2_C_secA"/>
    <property type="match status" value="1"/>
</dbReference>
<dbReference type="FunFam" id="3.90.1440.10:FF:000003">
    <property type="entry name" value="Preprotein translocase SecA subunit"/>
    <property type="match status" value="1"/>
</dbReference>
<dbReference type="FunFam" id="3.40.50.300:FF:000429">
    <property type="entry name" value="Preprotein translocase subunit SecA"/>
    <property type="match status" value="1"/>
</dbReference>
<dbReference type="FunFam" id="1.10.3060.10:FF:000003">
    <property type="entry name" value="Protein translocase subunit SecA"/>
    <property type="match status" value="1"/>
</dbReference>
<dbReference type="FunFam" id="3.40.50.300:FF:000334">
    <property type="entry name" value="Protein translocase subunit SecA"/>
    <property type="match status" value="1"/>
</dbReference>
<dbReference type="Gene3D" id="1.10.3060.10">
    <property type="entry name" value="Helical scaffold and wing domains of SecA"/>
    <property type="match status" value="1"/>
</dbReference>
<dbReference type="Gene3D" id="3.40.50.300">
    <property type="entry name" value="P-loop containing nucleotide triphosphate hydrolases"/>
    <property type="match status" value="2"/>
</dbReference>
<dbReference type="Gene3D" id="3.90.1440.10">
    <property type="entry name" value="SecA, preprotein cross-linking domain"/>
    <property type="match status" value="1"/>
</dbReference>
<dbReference type="HAMAP" id="MF_01382">
    <property type="entry name" value="SecA"/>
    <property type="match status" value="1"/>
</dbReference>
<dbReference type="InterPro" id="IPR014001">
    <property type="entry name" value="Helicase_ATP-bd"/>
</dbReference>
<dbReference type="InterPro" id="IPR027417">
    <property type="entry name" value="P-loop_NTPase"/>
</dbReference>
<dbReference type="InterPro" id="IPR000185">
    <property type="entry name" value="SecA"/>
</dbReference>
<dbReference type="InterPro" id="IPR020937">
    <property type="entry name" value="SecA_CS"/>
</dbReference>
<dbReference type="InterPro" id="IPR011115">
    <property type="entry name" value="SecA_DEAD"/>
</dbReference>
<dbReference type="InterPro" id="IPR014018">
    <property type="entry name" value="SecA_motor_DEAD"/>
</dbReference>
<dbReference type="InterPro" id="IPR011130">
    <property type="entry name" value="SecA_preprotein_X-link_dom"/>
</dbReference>
<dbReference type="InterPro" id="IPR044722">
    <property type="entry name" value="SecA_SF2_C"/>
</dbReference>
<dbReference type="InterPro" id="IPR011116">
    <property type="entry name" value="SecA_Wing/Scaffold"/>
</dbReference>
<dbReference type="InterPro" id="IPR036266">
    <property type="entry name" value="SecA_Wing/Scaffold_sf"/>
</dbReference>
<dbReference type="InterPro" id="IPR036670">
    <property type="entry name" value="SecA_X-link_sf"/>
</dbReference>
<dbReference type="NCBIfam" id="TIGR00963">
    <property type="entry name" value="secA"/>
    <property type="match status" value="1"/>
</dbReference>
<dbReference type="PANTHER" id="PTHR30612:SF0">
    <property type="entry name" value="CHLOROPLAST PROTEIN-TRANSPORTING ATPASE"/>
    <property type="match status" value="1"/>
</dbReference>
<dbReference type="PANTHER" id="PTHR30612">
    <property type="entry name" value="SECA INNER MEMBRANE COMPONENT OF SEC PROTEIN SECRETION SYSTEM"/>
    <property type="match status" value="1"/>
</dbReference>
<dbReference type="Pfam" id="PF21090">
    <property type="entry name" value="P-loop_SecA"/>
    <property type="match status" value="1"/>
</dbReference>
<dbReference type="Pfam" id="PF07517">
    <property type="entry name" value="SecA_DEAD"/>
    <property type="match status" value="1"/>
</dbReference>
<dbReference type="Pfam" id="PF01043">
    <property type="entry name" value="SecA_PP_bind"/>
    <property type="match status" value="1"/>
</dbReference>
<dbReference type="Pfam" id="PF07516">
    <property type="entry name" value="SecA_SW"/>
    <property type="match status" value="1"/>
</dbReference>
<dbReference type="PRINTS" id="PR00906">
    <property type="entry name" value="SECA"/>
</dbReference>
<dbReference type="SMART" id="SM00957">
    <property type="entry name" value="SecA_DEAD"/>
    <property type="match status" value="1"/>
</dbReference>
<dbReference type="SMART" id="SM00958">
    <property type="entry name" value="SecA_PP_bind"/>
    <property type="match status" value="1"/>
</dbReference>
<dbReference type="SUPFAM" id="SSF81886">
    <property type="entry name" value="Helical scaffold and wing domains of SecA"/>
    <property type="match status" value="1"/>
</dbReference>
<dbReference type="SUPFAM" id="SSF52540">
    <property type="entry name" value="P-loop containing nucleoside triphosphate hydrolases"/>
    <property type="match status" value="2"/>
</dbReference>
<dbReference type="SUPFAM" id="SSF81767">
    <property type="entry name" value="Pre-protein crosslinking domain of SecA"/>
    <property type="match status" value="1"/>
</dbReference>
<dbReference type="PROSITE" id="PS01312">
    <property type="entry name" value="SECA"/>
    <property type="match status" value="1"/>
</dbReference>
<dbReference type="PROSITE" id="PS51196">
    <property type="entry name" value="SECA_MOTOR_DEAD"/>
    <property type="match status" value="1"/>
</dbReference>